<gene>
    <name evidence="2" type="primary">efp</name>
    <name type="ordered locus">SF4303</name>
    <name type="ordered locus">S4570</name>
</gene>
<sequence>MATYYSNDFRAGLKIMLDGEPYAVEASEFVKPGKGQAFARVKLRRLLTGTRVEKTFKSTDSAEGADVVDMNLTYLYNDGEFWHFMNNETFEQLSADAKAIGDNAKWLLDQAECIVTLWNGQPISVTPPNFVELEIVDTDPGLKGDTAGTGGKPATLSTGAVVKVPLFVQIGEVIKVDTRSGEYVSRVK</sequence>
<dbReference type="EMBL" id="AE005674">
    <property type="protein sequence ID" value="AAN45721.1"/>
    <property type="molecule type" value="Genomic_DNA"/>
</dbReference>
<dbReference type="EMBL" id="AE014073">
    <property type="protein sequence ID" value="AAP19507.1"/>
    <property type="molecule type" value="Genomic_DNA"/>
</dbReference>
<dbReference type="RefSeq" id="NP_710014.1">
    <property type="nucleotide sequence ID" value="NC_004337.2"/>
</dbReference>
<dbReference type="RefSeq" id="WP_000257278.1">
    <property type="nucleotide sequence ID" value="NZ_WPGW01000002.1"/>
</dbReference>
<dbReference type="SMR" id="P0A6N7"/>
<dbReference type="STRING" id="198214.SF4303"/>
<dbReference type="PaxDb" id="198214-SF4303"/>
<dbReference type="GeneID" id="1025150"/>
<dbReference type="GeneID" id="93777677"/>
<dbReference type="KEGG" id="sfl:SF4303"/>
<dbReference type="KEGG" id="sfx:S4570"/>
<dbReference type="PATRIC" id="fig|198214.7.peg.5074"/>
<dbReference type="HOGENOM" id="CLU_074944_0_0_6"/>
<dbReference type="UniPathway" id="UPA00345"/>
<dbReference type="Proteomes" id="UP000001006">
    <property type="component" value="Chromosome"/>
</dbReference>
<dbReference type="Proteomes" id="UP000002673">
    <property type="component" value="Chromosome"/>
</dbReference>
<dbReference type="GO" id="GO:0005829">
    <property type="term" value="C:cytosol"/>
    <property type="evidence" value="ECO:0007669"/>
    <property type="project" value="UniProtKB-ARBA"/>
</dbReference>
<dbReference type="GO" id="GO:0003746">
    <property type="term" value="F:translation elongation factor activity"/>
    <property type="evidence" value="ECO:0007669"/>
    <property type="project" value="UniProtKB-UniRule"/>
</dbReference>
<dbReference type="GO" id="GO:0043043">
    <property type="term" value="P:peptide biosynthetic process"/>
    <property type="evidence" value="ECO:0007669"/>
    <property type="project" value="InterPro"/>
</dbReference>
<dbReference type="CDD" id="cd04470">
    <property type="entry name" value="S1_EF-P_repeat_1"/>
    <property type="match status" value="1"/>
</dbReference>
<dbReference type="CDD" id="cd05794">
    <property type="entry name" value="S1_EF-P_repeat_2"/>
    <property type="match status" value="1"/>
</dbReference>
<dbReference type="FunFam" id="2.30.30.30:FF:000003">
    <property type="entry name" value="Elongation factor P"/>
    <property type="match status" value="1"/>
</dbReference>
<dbReference type="FunFam" id="2.40.50.140:FF:000004">
    <property type="entry name" value="Elongation factor P"/>
    <property type="match status" value="1"/>
</dbReference>
<dbReference type="FunFam" id="2.40.50.140:FF:000009">
    <property type="entry name" value="Elongation factor P"/>
    <property type="match status" value="1"/>
</dbReference>
<dbReference type="Gene3D" id="2.30.30.30">
    <property type="match status" value="1"/>
</dbReference>
<dbReference type="Gene3D" id="2.40.50.140">
    <property type="entry name" value="Nucleic acid-binding proteins"/>
    <property type="match status" value="2"/>
</dbReference>
<dbReference type="HAMAP" id="MF_00141">
    <property type="entry name" value="EF_P"/>
    <property type="match status" value="1"/>
</dbReference>
<dbReference type="InterPro" id="IPR015365">
    <property type="entry name" value="Elong-fact-P_C"/>
</dbReference>
<dbReference type="InterPro" id="IPR012340">
    <property type="entry name" value="NA-bd_OB-fold"/>
</dbReference>
<dbReference type="InterPro" id="IPR014722">
    <property type="entry name" value="Rib_uL2_dom2"/>
</dbReference>
<dbReference type="InterPro" id="IPR020599">
    <property type="entry name" value="Transl_elong_fac_P/YeiP"/>
</dbReference>
<dbReference type="InterPro" id="IPR013185">
    <property type="entry name" value="Transl_elong_KOW-like"/>
</dbReference>
<dbReference type="InterPro" id="IPR001059">
    <property type="entry name" value="Transl_elong_P/YeiP_cen"/>
</dbReference>
<dbReference type="InterPro" id="IPR013852">
    <property type="entry name" value="Transl_elong_P/YeiP_CS"/>
</dbReference>
<dbReference type="InterPro" id="IPR011768">
    <property type="entry name" value="Transl_elongation_fac_P"/>
</dbReference>
<dbReference type="InterPro" id="IPR008991">
    <property type="entry name" value="Translation_prot_SH3-like_sf"/>
</dbReference>
<dbReference type="NCBIfam" id="TIGR00038">
    <property type="entry name" value="efp"/>
    <property type="match status" value="1"/>
</dbReference>
<dbReference type="NCBIfam" id="NF001810">
    <property type="entry name" value="PRK00529.1"/>
    <property type="match status" value="1"/>
</dbReference>
<dbReference type="PANTHER" id="PTHR30053">
    <property type="entry name" value="ELONGATION FACTOR P"/>
    <property type="match status" value="1"/>
</dbReference>
<dbReference type="PANTHER" id="PTHR30053:SF12">
    <property type="entry name" value="ELONGATION FACTOR P (EF-P) FAMILY PROTEIN"/>
    <property type="match status" value="1"/>
</dbReference>
<dbReference type="Pfam" id="PF01132">
    <property type="entry name" value="EFP"/>
    <property type="match status" value="1"/>
</dbReference>
<dbReference type="Pfam" id="PF08207">
    <property type="entry name" value="EFP_N"/>
    <property type="match status" value="1"/>
</dbReference>
<dbReference type="Pfam" id="PF09285">
    <property type="entry name" value="Elong-fact-P_C"/>
    <property type="match status" value="1"/>
</dbReference>
<dbReference type="PIRSF" id="PIRSF005901">
    <property type="entry name" value="EF-P"/>
    <property type="match status" value="1"/>
</dbReference>
<dbReference type="SMART" id="SM01185">
    <property type="entry name" value="EFP"/>
    <property type="match status" value="1"/>
</dbReference>
<dbReference type="SMART" id="SM00841">
    <property type="entry name" value="Elong-fact-P_C"/>
    <property type="match status" value="1"/>
</dbReference>
<dbReference type="SUPFAM" id="SSF50249">
    <property type="entry name" value="Nucleic acid-binding proteins"/>
    <property type="match status" value="2"/>
</dbReference>
<dbReference type="SUPFAM" id="SSF50104">
    <property type="entry name" value="Translation proteins SH3-like domain"/>
    <property type="match status" value="1"/>
</dbReference>
<dbReference type="PROSITE" id="PS01275">
    <property type="entry name" value="EFP"/>
    <property type="match status" value="1"/>
</dbReference>
<organism>
    <name type="scientific">Shigella flexneri</name>
    <dbReference type="NCBI Taxonomy" id="623"/>
    <lineage>
        <taxon>Bacteria</taxon>
        <taxon>Pseudomonadati</taxon>
        <taxon>Pseudomonadota</taxon>
        <taxon>Gammaproteobacteria</taxon>
        <taxon>Enterobacterales</taxon>
        <taxon>Enterobacteriaceae</taxon>
        <taxon>Shigella</taxon>
    </lineage>
</organism>
<comment type="function">
    <text evidence="2">Involved in peptide bond synthesis. Alleviates ribosome stalling that occurs when 3 or more consecutive Pro residues or the sequence PPG is present in a protein, possibly by augmenting the peptidyl transferase activity of the ribosome. Modification of Lys-34 is required for alleviation.</text>
</comment>
<comment type="pathway">
    <text evidence="2">Protein biosynthesis; polypeptide chain elongation.</text>
</comment>
<comment type="subcellular location">
    <subcellularLocation>
        <location evidence="2">Cytoplasm</location>
    </subcellularLocation>
</comment>
<comment type="PTM">
    <text evidence="2">Is beta-lysylated on the epsilon-amino group of Lys-34 by the combined action of EpmA and EpmB, and then hydroxylated on the C5 position of the same residue by EpmC. Lysylation is critical for the stimulatory effect of EF-P on peptide-bond formation. The lysylation moiety would extend toward the peptidyltransferase center and stabilize the terminal 3-CCA end of the tRNA. The hydroxylation of the C5 position on Lys-34 would allow additional potential stabilizing hydrogen-bond interactions with the P-tRNA.</text>
</comment>
<comment type="similarity">
    <text evidence="2">Belongs to the elongation factor P family.</text>
</comment>
<keyword id="KW-0963">Cytoplasm</keyword>
<keyword id="KW-0251">Elongation factor</keyword>
<keyword id="KW-0379">Hydroxylation</keyword>
<keyword id="KW-0648">Protein biosynthesis</keyword>
<keyword id="KW-1185">Reference proteome</keyword>
<protein>
    <recommendedName>
        <fullName evidence="2">Elongation factor P</fullName>
        <shortName evidence="2">EF-P</shortName>
    </recommendedName>
</protein>
<feature type="initiator methionine" description="Removed" evidence="1">
    <location>
        <position position="1"/>
    </location>
</feature>
<feature type="chain" id="PRO_0000094326" description="Elongation factor P">
    <location>
        <begin position="2"/>
        <end position="188"/>
    </location>
</feature>
<feature type="modified residue" description="N6-(3,6-diaminohexanoyl)-5-hydroxylysine" evidence="2">
    <location>
        <position position="34"/>
    </location>
</feature>
<reference key="1">
    <citation type="journal article" date="2002" name="Nucleic Acids Res.">
        <title>Genome sequence of Shigella flexneri 2a: insights into pathogenicity through comparison with genomes of Escherichia coli K12 and O157.</title>
        <authorList>
            <person name="Jin Q."/>
            <person name="Yuan Z."/>
            <person name="Xu J."/>
            <person name="Wang Y."/>
            <person name="Shen Y."/>
            <person name="Lu W."/>
            <person name="Wang J."/>
            <person name="Liu H."/>
            <person name="Yang J."/>
            <person name="Yang F."/>
            <person name="Zhang X."/>
            <person name="Zhang J."/>
            <person name="Yang G."/>
            <person name="Wu H."/>
            <person name="Qu D."/>
            <person name="Dong J."/>
            <person name="Sun L."/>
            <person name="Xue Y."/>
            <person name="Zhao A."/>
            <person name="Gao Y."/>
            <person name="Zhu J."/>
            <person name="Kan B."/>
            <person name="Ding K."/>
            <person name="Chen S."/>
            <person name="Cheng H."/>
            <person name="Yao Z."/>
            <person name="He B."/>
            <person name="Chen R."/>
            <person name="Ma D."/>
            <person name="Qiang B."/>
            <person name="Wen Y."/>
            <person name="Hou Y."/>
            <person name="Yu J."/>
        </authorList>
    </citation>
    <scope>NUCLEOTIDE SEQUENCE [LARGE SCALE GENOMIC DNA]</scope>
    <source>
        <strain>301 / Serotype 2a</strain>
    </source>
</reference>
<reference key="2">
    <citation type="journal article" date="2003" name="Infect. Immun.">
        <title>Complete genome sequence and comparative genomics of Shigella flexneri serotype 2a strain 2457T.</title>
        <authorList>
            <person name="Wei J."/>
            <person name="Goldberg M.B."/>
            <person name="Burland V."/>
            <person name="Venkatesan M.M."/>
            <person name="Deng W."/>
            <person name="Fournier G."/>
            <person name="Mayhew G.F."/>
            <person name="Plunkett G. III"/>
            <person name="Rose D.J."/>
            <person name="Darling A."/>
            <person name="Mau B."/>
            <person name="Perna N.T."/>
            <person name="Payne S.M."/>
            <person name="Runyen-Janecky L.J."/>
            <person name="Zhou S."/>
            <person name="Schwartz D.C."/>
            <person name="Blattner F.R."/>
        </authorList>
    </citation>
    <scope>NUCLEOTIDE SEQUENCE [LARGE SCALE GENOMIC DNA]</scope>
    <source>
        <strain>ATCC 700930 / 2457T / Serotype 2a</strain>
    </source>
</reference>
<accession>P0A6N7</accession>
<accession>P33398</accession>
<name>EFP_SHIFL</name>
<proteinExistence type="inferred from homology"/>
<evidence type="ECO:0000250" key="1"/>
<evidence type="ECO:0000255" key="2">
    <source>
        <dbReference type="HAMAP-Rule" id="MF_00141"/>
    </source>
</evidence>